<sequence length="703" mass="75179">MAPADLASEGPKLEDPPAPHLFGKCPSGLIMANVETLPVRADPGRDPLLAFAPRPAELGPPDPRLTMGSVGGGVTHAQEFPMKSVGTRTGGGGSQGSFPGPRSSGSGTNRERPGPGRYPSEDKVLANSLYLNGELRGSDHTDVCGNVVGSSGGSSSSGGSDKAPPQYREPNHPPKLLTTSGKLDQCSEPLVRPSAFKPVVPKNFHSMQNLCPPQTNGTPEGRQGPAGLKGGLEKSRTMTPAGGSGGGGLSDSGRNSLTSLPTYSSSYSQHLAPLSASTSHINRIGTPGYSSGGGGGGSGYQDLGTSDSGRASSKSGSSSSMGRSGHLGSGEGGNGGLPFAACSPPSPSALIQELEERLWEKEQEVAALRRSQEQSEAAVAQVLEERQKAWERELAELRQGCSGKLQQVARRAQRAQQGLQLQVLRLQQDKKQLQEEAAQLIRQREELEDKVAACQKEQADFLPRMEETKWEVCQKAGEISLLKQQLKDSQADVSQKLSEIVGLRSQLREGRASLREKEEQLLSLRDSFGSKQASLELSEGELPPACLKPALTPVDLVEPQEALASCESDEAKMRRQAGVAAAASLVSVDGEVDAGGEGGTRALRREVGRLQAELAAERRARERQGASFAEERRVWLEEKEKVIEYQKQLQLSYVEMYQRNQQLERRLRERGAAGGSRTPTPQHGEEEKAWTPSRLERIESTEI</sequence>
<comment type="function">
    <text evidence="5">May be involved in promoting the maturation of dendritic spines, probably via regulating SIPA1L1 levels at the postsynaptic density of synapses (PubMed:27252646).</text>
</comment>
<comment type="subunit">
    <text evidence="4">Interacts (via C-terminus) with SHANK3 (via PDZ domain) (PubMed:16522626). Interacts (via coiled coil) with SIPA1L1 (PubMed:16522626). Can form homooligomers (PubMed:16522626).</text>
</comment>
<comment type="subcellular location">
    <subcellularLocation>
        <location evidence="5">Synapse</location>
    </subcellularLocation>
    <subcellularLocation>
        <location evidence="4 5">Postsynaptic density</location>
    </subcellularLocation>
    <subcellularLocation>
        <location evidence="4">Cell projection</location>
        <location evidence="4">Dendritic spine</location>
    </subcellularLocation>
    <subcellularLocation>
        <location evidence="4">Cell projection</location>
        <location evidence="4">Dendrite</location>
    </subcellularLocation>
    <subcellularLocation>
        <location evidence="4">Cytoplasm</location>
        <location evidence="4">Cytoskeleton</location>
    </subcellularLocation>
    <text evidence="4 5">Rather found at excitatory than inhibitory synapses (PubMed:27252646).</text>
</comment>
<comment type="tissue specificity">
    <text evidence="4">Detected in brain, with highest expression in brain cortex, caudate putamen, cerebellum and hippocampus. Detected in neuropil (at protein level). Detected in brain and kidney.</text>
</comment>
<comment type="developmental stage">
    <text evidence="4">Detected at low levels in newborn brain. Levels increase steadily during postnatal development up to adulthood.</text>
</comment>
<comment type="similarity">
    <text evidence="7">Belongs to the LZTS3 family.</text>
</comment>
<gene>
    <name evidence="8" type="primary">Lzts3</name>
    <name evidence="6" type="synonym">Prosapip1</name>
</gene>
<keyword id="KW-0002">3D-structure</keyword>
<keyword id="KW-0966">Cell projection</keyword>
<keyword id="KW-0175">Coiled coil</keyword>
<keyword id="KW-0963">Cytoplasm</keyword>
<keyword id="KW-0206">Cytoskeleton</keyword>
<keyword id="KW-0597">Phosphoprotein</keyword>
<keyword id="KW-1185">Reference proteome</keyword>
<keyword id="KW-0770">Synapse</keyword>
<reference key="1">
    <citation type="journal article" date="2006" name="J. Biol. Chem.">
        <title>ProSAP-interacting protein 1 (ProSAPiP1), a novel protein of the postsynaptic density that links the spine-associated Rap-Gap (SPAR) to the scaffolding protein ProSAP2/Shank3.</title>
        <authorList>
            <person name="Wendholt D."/>
            <person name="Spilker C."/>
            <person name="Schmitt A."/>
            <person name="Dolnik A."/>
            <person name="Smalla K.H."/>
            <person name="Proepper C."/>
            <person name="Bockmann J."/>
            <person name="Sobue K."/>
            <person name="Gundelfinger E.D."/>
            <person name="Kreutz M.R."/>
            <person name="Boeckers T.M."/>
        </authorList>
    </citation>
    <scope>NUCLEOTIDE SEQUENCE [MRNA]</scope>
    <scope>INTERACTION WITH SHANK3 AND SIPA1L1</scope>
    <scope>SUBUNIT</scope>
    <scope>SUBCELLULAR LOCATION</scope>
    <scope>DEVELOPMENTAL STAGE</scope>
    <scope>MUTAGENESIS OF SER-700; THR-701 AND ILE-703</scope>
    <scope>TISSUE SPECIFICITY</scope>
</reference>
<reference key="2">
    <citation type="journal article" date="2016" name="Front. Synaptic Neurosci.">
        <title>The Shank3 interaction partner ProSAPiP1 regulates postsynaptic SPAR levels and the maturation of dendritic spines in hippocampal neurons.</title>
        <authorList>
            <person name="Reim D."/>
            <person name="Weis T.M."/>
            <person name="Halbedl S."/>
            <person name="Delling J.P."/>
            <person name="Grabrucker A.M."/>
            <person name="Boeckers T.M."/>
            <person name="Schmeisser M.J."/>
        </authorList>
    </citation>
    <scope>SUBCELLULAR LOCATION</scope>
    <scope>FUNCTION</scope>
</reference>
<organism>
    <name type="scientific">Rattus norvegicus</name>
    <name type="common">Rat</name>
    <dbReference type="NCBI Taxonomy" id="10116"/>
    <lineage>
        <taxon>Eukaryota</taxon>
        <taxon>Metazoa</taxon>
        <taxon>Chordata</taxon>
        <taxon>Craniata</taxon>
        <taxon>Vertebrata</taxon>
        <taxon>Euteleostomi</taxon>
        <taxon>Mammalia</taxon>
        <taxon>Eutheria</taxon>
        <taxon>Euarchontoglires</taxon>
        <taxon>Glires</taxon>
        <taxon>Rodentia</taxon>
        <taxon>Myomorpha</taxon>
        <taxon>Muroidea</taxon>
        <taxon>Muridae</taxon>
        <taxon>Murinae</taxon>
        <taxon>Rattus</taxon>
    </lineage>
</organism>
<feature type="chain" id="PRO_0000394200" description="Leucine zipper putative tumor suppressor 3">
    <location>
        <begin position="1"/>
        <end position="703"/>
    </location>
</feature>
<feature type="region of interest" description="Disordered" evidence="3">
    <location>
        <begin position="1"/>
        <end position="22"/>
    </location>
</feature>
<feature type="region of interest" description="Disordered" evidence="3">
    <location>
        <begin position="40"/>
        <end position="190"/>
    </location>
</feature>
<feature type="region of interest" description="Disordered" evidence="3">
    <location>
        <begin position="204"/>
        <end position="347"/>
    </location>
</feature>
<feature type="region of interest" description="Disordered" evidence="3">
    <location>
        <begin position="665"/>
        <end position="703"/>
    </location>
</feature>
<feature type="coiled-coil region" evidence="2">
    <location>
        <begin position="348"/>
        <end position="526"/>
    </location>
</feature>
<feature type="coiled-coil region" evidence="2">
    <location>
        <begin position="600"/>
        <end position="669"/>
    </location>
</feature>
<feature type="compositionally biased region" description="Low complexity" evidence="3">
    <location>
        <begin position="96"/>
        <end position="107"/>
    </location>
</feature>
<feature type="compositionally biased region" description="Basic and acidic residues" evidence="3">
    <location>
        <begin position="109"/>
        <end position="124"/>
    </location>
</feature>
<feature type="compositionally biased region" description="Polar residues" evidence="3">
    <location>
        <begin position="205"/>
        <end position="218"/>
    </location>
</feature>
<feature type="compositionally biased region" description="Low complexity" evidence="3">
    <location>
        <begin position="251"/>
        <end position="268"/>
    </location>
</feature>
<feature type="compositionally biased region" description="Gly residues" evidence="3">
    <location>
        <begin position="290"/>
        <end position="299"/>
    </location>
</feature>
<feature type="compositionally biased region" description="Low complexity" evidence="3">
    <location>
        <begin position="304"/>
        <end position="324"/>
    </location>
</feature>
<feature type="compositionally biased region" description="Gly residues" evidence="3">
    <location>
        <begin position="325"/>
        <end position="336"/>
    </location>
</feature>
<feature type="compositionally biased region" description="Basic and acidic residues" evidence="3">
    <location>
        <begin position="683"/>
        <end position="703"/>
    </location>
</feature>
<feature type="modified residue" description="Phosphoserine" evidence="1">
    <location>
        <position position="346"/>
    </location>
</feature>
<feature type="modified residue" description="Phosphoserine" evidence="1">
    <location>
        <position position="348"/>
    </location>
</feature>
<feature type="mutagenesis site" description="Abolishes interaction with SHANK3." evidence="4">
    <original>S</original>
    <variation>G</variation>
    <variation>S</variation>
    <location>
        <position position="700"/>
    </location>
</feature>
<feature type="mutagenesis site" description="Abolishes interaction with SHANK3." evidence="4">
    <original>T</original>
    <variation>A</variation>
    <variation>S</variation>
    <location>
        <position position="701"/>
    </location>
</feature>
<feature type="mutagenesis site" description="Abolishes interaction with SHANK3." evidence="4">
    <original>I</original>
    <variation>A</variation>
    <variation>G</variation>
    <variation>V</variation>
    <location>
        <position position="703"/>
    </location>
</feature>
<feature type="strand" evidence="9">
    <location>
        <begin position="699"/>
        <end position="702"/>
    </location>
</feature>
<evidence type="ECO:0000250" key="1">
    <source>
        <dbReference type="UniProtKB" id="A2AHG0"/>
    </source>
</evidence>
<evidence type="ECO:0000255" key="2"/>
<evidence type="ECO:0000256" key="3">
    <source>
        <dbReference type="SAM" id="MobiDB-lite"/>
    </source>
</evidence>
<evidence type="ECO:0000269" key="4">
    <source>
    </source>
</evidence>
<evidence type="ECO:0000269" key="5">
    <source>
    </source>
</evidence>
<evidence type="ECO:0000303" key="6">
    <source>
    </source>
</evidence>
<evidence type="ECO:0000305" key="7"/>
<evidence type="ECO:0000312" key="8">
    <source>
        <dbReference type="RGD" id="631327"/>
    </source>
</evidence>
<evidence type="ECO:0007829" key="9">
    <source>
        <dbReference type="PDB" id="5OVV"/>
    </source>
</evidence>
<proteinExistence type="evidence at protein level"/>
<protein>
    <recommendedName>
        <fullName evidence="7">Leucine zipper putative tumor suppressor 3</fullName>
    </recommendedName>
    <alternativeName>
        <fullName evidence="6">ProSAP-interacting protein 1</fullName>
        <shortName evidence="6">ProSAPiP1</shortName>
    </alternativeName>
</protein>
<accession>Q8K1Q4</accession>
<name>LZTS3_RAT</name>
<dbReference type="EMBL" id="AJ278801">
    <property type="protein sequence ID" value="CAC82182.2"/>
    <property type="molecule type" value="mRNA"/>
</dbReference>
<dbReference type="RefSeq" id="NP_742019.2">
    <property type="nucleotide sequence ID" value="NM_172022.2"/>
</dbReference>
<dbReference type="PDB" id="5OVV">
    <property type="method" value="X-ray"/>
    <property type="resolution" value="1.40 A"/>
    <property type="chains" value="B=698-703"/>
</dbReference>
<dbReference type="PDBsum" id="5OVV"/>
<dbReference type="SMR" id="Q8K1Q4"/>
<dbReference type="FunCoup" id="Q8K1Q4">
    <property type="interactions" value="1057"/>
</dbReference>
<dbReference type="STRING" id="10116.ENSRNOP00000028835"/>
<dbReference type="iPTMnet" id="Q8K1Q4"/>
<dbReference type="PhosphoSitePlus" id="Q8K1Q4"/>
<dbReference type="PaxDb" id="10116-ENSRNOP00000028835"/>
<dbReference type="GeneID" id="280670"/>
<dbReference type="KEGG" id="rno:280670"/>
<dbReference type="UCSC" id="RGD:631327">
    <property type="organism name" value="rat"/>
</dbReference>
<dbReference type="AGR" id="RGD:631327"/>
<dbReference type="CTD" id="9762"/>
<dbReference type="RGD" id="631327">
    <property type="gene designation" value="Lzts3"/>
</dbReference>
<dbReference type="eggNOG" id="ENOG502QWFS">
    <property type="taxonomic scope" value="Eukaryota"/>
</dbReference>
<dbReference type="InParanoid" id="Q8K1Q4"/>
<dbReference type="OrthoDB" id="10030037at2759"/>
<dbReference type="PhylomeDB" id="Q8K1Q4"/>
<dbReference type="PRO" id="PR:Q8K1Q4"/>
<dbReference type="Proteomes" id="UP000002494">
    <property type="component" value="Unplaced"/>
</dbReference>
<dbReference type="GO" id="GO:0005737">
    <property type="term" value="C:cytoplasm"/>
    <property type="evidence" value="ECO:0007669"/>
    <property type="project" value="UniProtKB-KW"/>
</dbReference>
<dbReference type="GO" id="GO:0005856">
    <property type="term" value="C:cytoskeleton"/>
    <property type="evidence" value="ECO:0007669"/>
    <property type="project" value="UniProtKB-SubCell"/>
</dbReference>
<dbReference type="GO" id="GO:0043197">
    <property type="term" value="C:dendritic spine"/>
    <property type="evidence" value="ECO:0000314"/>
    <property type="project" value="UniProtKB"/>
</dbReference>
<dbReference type="GO" id="GO:0098978">
    <property type="term" value="C:glutamatergic synapse"/>
    <property type="evidence" value="ECO:0000314"/>
    <property type="project" value="SynGO"/>
</dbReference>
<dbReference type="GO" id="GO:0014069">
    <property type="term" value="C:postsynaptic density"/>
    <property type="evidence" value="ECO:0000314"/>
    <property type="project" value="UniProtKB"/>
</dbReference>
<dbReference type="GO" id="GO:0045202">
    <property type="term" value="C:synapse"/>
    <property type="evidence" value="ECO:0000314"/>
    <property type="project" value="UniProtKB"/>
</dbReference>
<dbReference type="GO" id="GO:0030165">
    <property type="term" value="F:PDZ domain binding"/>
    <property type="evidence" value="ECO:0000353"/>
    <property type="project" value="UniProtKB"/>
</dbReference>
<dbReference type="GO" id="GO:0051260">
    <property type="term" value="P:protein homooligomerization"/>
    <property type="evidence" value="ECO:0000353"/>
    <property type="project" value="UniProtKB"/>
</dbReference>
<dbReference type="GO" id="GO:0061001">
    <property type="term" value="P:regulation of dendritic spine morphogenesis"/>
    <property type="evidence" value="ECO:0000315"/>
    <property type="project" value="UniProtKB"/>
</dbReference>
<dbReference type="GO" id="GO:0150052">
    <property type="term" value="P:regulation of postsynapse assembly"/>
    <property type="evidence" value="ECO:0000314"/>
    <property type="project" value="SynGO"/>
</dbReference>
<dbReference type="InterPro" id="IPR045329">
    <property type="entry name" value="LZTS"/>
</dbReference>
<dbReference type="PANTHER" id="PTHR19354">
    <property type="entry name" value="ZIPPER PUTATIVE TUMOR SUPPRESSOR 2 HOMOLOG-LIKE PROTEIN-RELATED"/>
    <property type="match status" value="1"/>
</dbReference>
<dbReference type="PANTHER" id="PTHR19354:SF6">
    <property type="entry name" value="ZIPPER PUTATIVE TUMOR SUPPRESSOR 3-RELATED"/>
    <property type="match status" value="1"/>
</dbReference>
<dbReference type="Pfam" id="PF06818">
    <property type="entry name" value="Fez1"/>
    <property type="match status" value="1"/>
</dbReference>